<protein>
    <recommendedName>
        <fullName>3-oxo-Delta(4,5)-steroid 5-beta-reductase</fullName>
        <ecNumber evidence="3 4 5">1.3.1.3</ecNumber>
    </recommendedName>
    <alternativeName>
        <fullName>Delta(4)-3-oxosteroid 5-beta-reductase</fullName>
    </alternativeName>
    <alternativeName>
        <fullName>Delta-4,5-steroid 5-beta-reductase</fullName>
        <shortName>At5beta-StR</shortName>
    </alternativeName>
    <alternativeName>
        <fullName>Progesterone 5-beta-reductase</fullName>
        <shortName>5beta-POR</shortName>
    </alternativeName>
    <alternativeName>
        <fullName>Protein VEIN PATTERNING 1</fullName>
    </alternativeName>
</protein>
<organism>
    <name type="scientific">Arabidopsis thaliana</name>
    <name type="common">Mouse-ear cress</name>
    <dbReference type="NCBI Taxonomy" id="3702"/>
    <lineage>
        <taxon>Eukaryota</taxon>
        <taxon>Viridiplantae</taxon>
        <taxon>Streptophyta</taxon>
        <taxon>Embryophyta</taxon>
        <taxon>Tracheophyta</taxon>
        <taxon>Spermatophyta</taxon>
        <taxon>Magnoliopsida</taxon>
        <taxon>eudicotyledons</taxon>
        <taxon>Gunneridae</taxon>
        <taxon>Pentapetalae</taxon>
        <taxon>rosids</taxon>
        <taxon>malvids</taxon>
        <taxon>Brassicales</taxon>
        <taxon>Brassicaceae</taxon>
        <taxon>Camelineae</taxon>
        <taxon>Arabidopsis</taxon>
    </lineage>
</organism>
<sequence length="388" mass="44230">MSWWWAGAIGAAKKKLDEDEPSQSFESVALIIGVTGIVGNSLAEILPLSDTPGGPWKVYGVARRPRPTWNADHPIDYIQCDVSDAEDTRSKLSPLTDVTHVFYVTWTNRESESENCEANGSMLRNVLQAIIPYAPNLRHVCLQTGTKHYLGPFTNVDGPRHDPPFTEDMPRLQIQNFYYTQEDILFEEIKKIETVTWSIHRPNMIFGFSPYSLMNIVGTLCVYAAICKHEGSPLLFPGSKKAWEGFMTASDADLIAEQQIWAAVDPYAKNEAFNCNNADIFKWKHLWKILAEQFGIEEYGFEEGKNLGLVEMMKGKERVWEEMVKENQLQEKKLEEVGVWWFADVILGVEGMIDSMNKSKEYGFLGFRNSNNSFISWIDKYKAFKIVP</sequence>
<reference key="1">
    <citation type="journal article" date="1997" name="Mol. Cells">
        <title>Structure and expression of the AWI 31 gene specifically induced by wounding in Arabidopsis thaliana.</title>
        <authorList>
            <person name="Yang K.Y."/>
            <person name="Moon Y.H."/>
            <person name="Choi K.H."/>
            <person name="Kim Y.H."/>
            <person name="Eun M.Y."/>
            <person name="Guh J.O."/>
            <person name="Kim K.C."/>
            <person name="Cho B.H."/>
        </authorList>
    </citation>
    <scope>NUCLEOTIDE SEQUENCE [MRNA] (ISOFORM 1)</scope>
    <scope>INDUCTION</scope>
</reference>
<reference key="2">
    <citation type="journal article" date="2002" name="Plant Cell Physiol.">
        <title>Involvement of the VEP1 gene in vascular strand development in Arabidopsis thaliana.</title>
        <authorList>
            <person name="Jun J.H."/>
            <person name="Ha C.M."/>
            <person name="Nam H.G."/>
        </authorList>
    </citation>
    <scope>NUCLEOTIDE SEQUENCE [MRNA] (ISOFORM 1)</scope>
    <scope>FUNCTION</scope>
    <scope>TISSUE SPECIFICITY</scope>
    <scope>INDUCTION BY WOUNDING</scope>
</reference>
<reference key="3">
    <citation type="journal article" date="2008" name="Plant Syst. Evol.">
        <title>Using progesterone 5beta-reductase, a gene encoding a key enzyme in the cardenolide biosynthesis, to infer the phylogeny of the genus Digitalis.</title>
        <authorList>
            <person name="Herl V."/>
            <person name="Albach D.C."/>
            <person name="Mueller-Uri F."/>
            <person name="Braeuchler C."/>
            <person name="Heubl G."/>
            <person name="Kreis W."/>
        </authorList>
        <dbReference type="AGRICOLA" id="IND44043462"/>
    </citation>
    <scope>NUCLEOTIDE SEQUENCE [MRNA] (ISOFORM 1)</scope>
    <source>
        <tissue>Leaf</tissue>
    </source>
</reference>
<reference key="4">
    <citation type="journal article" date="2009" name="Biochimie">
        <title>The VEP1 gene (At4g24220) encodes a short-chain dehydrogenase/reductase with 3-oxo-Delta4,5-steroid 5beta-reductase activity in Arabidopsis thaliana L.</title>
        <authorList>
            <person name="Herl V."/>
            <person name="Fischer G."/>
            <person name="Reva V.A."/>
            <person name="Stiebritz M."/>
            <person name="Muller Y.A."/>
            <person name="Mueller-Uri F."/>
            <person name="Kreis W."/>
        </authorList>
    </citation>
    <scope>NUCLEOTIDE SEQUENCE [MRNA] (ISOFORM 1)</scope>
    <scope>FUNCTION</scope>
    <scope>CATALYTIC ACTIVITY</scope>
    <scope>BIOPHYSICOCHEMICAL PROPERTIES</scope>
    <scope>SUBSTRATE SPECIFICITY</scope>
    <scope>TISSUE SPECIFICITY</scope>
    <scope>SUBUNIT</scope>
    <scope>3D-STRUCTURE MODELING</scope>
</reference>
<reference key="5">
    <citation type="journal article" date="1999" name="Nature">
        <title>Sequence and analysis of chromosome 4 of the plant Arabidopsis thaliana.</title>
        <authorList>
            <person name="Mayer K.F.X."/>
            <person name="Schueller C."/>
            <person name="Wambutt R."/>
            <person name="Murphy G."/>
            <person name="Volckaert G."/>
            <person name="Pohl T."/>
            <person name="Duesterhoeft A."/>
            <person name="Stiekema W."/>
            <person name="Entian K.-D."/>
            <person name="Terryn N."/>
            <person name="Harris B."/>
            <person name="Ansorge W."/>
            <person name="Brandt P."/>
            <person name="Grivell L.A."/>
            <person name="Rieger M."/>
            <person name="Weichselgartner M."/>
            <person name="de Simone V."/>
            <person name="Obermaier B."/>
            <person name="Mache R."/>
            <person name="Mueller M."/>
            <person name="Kreis M."/>
            <person name="Delseny M."/>
            <person name="Puigdomenech P."/>
            <person name="Watson M."/>
            <person name="Schmidtheini T."/>
            <person name="Reichert B."/>
            <person name="Portetelle D."/>
            <person name="Perez-Alonso M."/>
            <person name="Boutry M."/>
            <person name="Bancroft I."/>
            <person name="Vos P."/>
            <person name="Hoheisel J."/>
            <person name="Zimmermann W."/>
            <person name="Wedler H."/>
            <person name="Ridley P."/>
            <person name="Langham S.-A."/>
            <person name="McCullagh B."/>
            <person name="Bilham L."/>
            <person name="Robben J."/>
            <person name="van der Schueren J."/>
            <person name="Grymonprez B."/>
            <person name="Chuang Y.-J."/>
            <person name="Vandenbussche F."/>
            <person name="Braeken M."/>
            <person name="Weltjens I."/>
            <person name="Voet M."/>
            <person name="Bastiaens I."/>
            <person name="Aert R."/>
            <person name="Defoor E."/>
            <person name="Weitzenegger T."/>
            <person name="Bothe G."/>
            <person name="Ramsperger U."/>
            <person name="Hilbert H."/>
            <person name="Braun M."/>
            <person name="Holzer E."/>
            <person name="Brandt A."/>
            <person name="Peters S."/>
            <person name="van Staveren M."/>
            <person name="Dirkse W."/>
            <person name="Mooijman P."/>
            <person name="Klein Lankhorst R."/>
            <person name="Rose M."/>
            <person name="Hauf J."/>
            <person name="Koetter P."/>
            <person name="Berneiser S."/>
            <person name="Hempel S."/>
            <person name="Feldpausch M."/>
            <person name="Lamberth S."/>
            <person name="Van den Daele H."/>
            <person name="De Keyser A."/>
            <person name="Buysshaert C."/>
            <person name="Gielen J."/>
            <person name="Villarroel R."/>
            <person name="De Clercq R."/>
            <person name="van Montagu M."/>
            <person name="Rogers J."/>
            <person name="Cronin A."/>
            <person name="Quail M.A."/>
            <person name="Bray-Allen S."/>
            <person name="Clark L."/>
            <person name="Doggett J."/>
            <person name="Hall S."/>
            <person name="Kay M."/>
            <person name="Lennard N."/>
            <person name="McLay K."/>
            <person name="Mayes R."/>
            <person name="Pettett A."/>
            <person name="Rajandream M.A."/>
            <person name="Lyne M."/>
            <person name="Benes V."/>
            <person name="Rechmann S."/>
            <person name="Borkova D."/>
            <person name="Bloecker H."/>
            <person name="Scharfe M."/>
            <person name="Grimm M."/>
            <person name="Loehnert T.-H."/>
            <person name="Dose S."/>
            <person name="de Haan M."/>
            <person name="Maarse A.C."/>
            <person name="Schaefer M."/>
            <person name="Mueller-Auer S."/>
            <person name="Gabel C."/>
            <person name="Fuchs M."/>
            <person name="Fartmann B."/>
            <person name="Granderath K."/>
            <person name="Dauner D."/>
            <person name="Herzl A."/>
            <person name="Neumann S."/>
            <person name="Argiriou A."/>
            <person name="Vitale D."/>
            <person name="Liguori R."/>
            <person name="Piravandi E."/>
            <person name="Massenet O."/>
            <person name="Quigley F."/>
            <person name="Clabauld G."/>
            <person name="Muendlein A."/>
            <person name="Felber R."/>
            <person name="Schnabl S."/>
            <person name="Hiller R."/>
            <person name="Schmidt W."/>
            <person name="Lecharny A."/>
            <person name="Aubourg S."/>
            <person name="Chefdor F."/>
            <person name="Cooke R."/>
            <person name="Berger C."/>
            <person name="Monfort A."/>
            <person name="Casacuberta E."/>
            <person name="Gibbons T."/>
            <person name="Weber N."/>
            <person name="Vandenbol M."/>
            <person name="Bargues M."/>
            <person name="Terol J."/>
            <person name="Torres A."/>
            <person name="Perez-Perez A."/>
            <person name="Purnelle B."/>
            <person name="Bent E."/>
            <person name="Johnson S."/>
            <person name="Tacon D."/>
            <person name="Jesse T."/>
            <person name="Heijnen L."/>
            <person name="Schwarz S."/>
            <person name="Scholler P."/>
            <person name="Heber S."/>
            <person name="Francs P."/>
            <person name="Bielke C."/>
            <person name="Frishman D."/>
            <person name="Haase D."/>
            <person name="Lemcke K."/>
            <person name="Mewes H.-W."/>
            <person name="Stocker S."/>
            <person name="Zaccaria P."/>
            <person name="Bevan M."/>
            <person name="Wilson R.K."/>
            <person name="de la Bastide M."/>
            <person name="Habermann K."/>
            <person name="Parnell L."/>
            <person name="Dedhia N."/>
            <person name="Gnoj L."/>
            <person name="Schutz K."/>
            <person name="Huang E."/>
            <person name="Spiegel L."/>
            <person name="Sekhon M."/>
            <person name="Murray J."/>
            <person name="Sheet P."/>
            <person name="Cordes M."/>
            <person name="Abu-Threideh J."/>
            <person name="Stoneking T."/>
            <person name="Kalicki J."/>
            <person name="Graves T."/>
            <person name="Harmon G."/>
            <person name="Edwards J."/>
            <person name="Latreille P."/>
            <person name="Courtney L."/>
            <person name="Cloud J."/>
            <person name="Abbott A."/>
            <person name="Scott K."/>
            <person name="Johnson D."/>
            <person name="Minx P."/>
            <person name="Bentley D."/>
            <person name="Fulton B."/>
            <person name="Miller N."/>
            <person name="Greco T."/>
            <person name="Kemp K."/>
            <person name="Kramer J."/>
            <person name="Fulton L."/>
            <person name="Mardis E."/>
            <person name="Dante M."/>
            <person name="Pepin K."/>
            <person name="Hillier L.W."/>
            <person name="Nelson J."/>
            <person name="Spieth J."/>
            <person name="Ryan E."/>
            <person name="Andrews S."/>
            <person name="Geisel C."/>
            <person name="Layman D."/>
            <person name="Du H."/>
            <person name="Ali J."/>
            <person name="Berghoff A."/>
            <person name="Jones K."/>
            <person name="Drone K."/>
            <person name="Cotton M."/>
            <person name="Joshu C."/>
            <person name="Antonoiu B."/>
            <person name="Zidanic M."/>
            <person name="Strong C."/>
            <person name="Sun H."/>
            <person name="Lamar B."/>
            <person name="Yordan C."/>
            <person name="Ma P."/>
            <person name="Zhong J."/>
            <person name="Preston R."/>
            <person name="Vil D."/>
            <person name="Shekher M."/>
            <person name="Matero A."/>
            <person name="Shah R."/>
            <person name="Swaby I.K."/>
            <person name="O'Shaughnessy A."/>
            <person name="Rodriguez M."/>
            <person name="Hoffman J."/>
            <person name="Till S."/>
            <person name="Granat S."/>
            <person name="Shohdy N."/>
            <person name="Hasegawa A."/>
            <person name="Hameed A."/>
            <person name="Lodhi M."/>
            <person name="Johnson A."/>
            <person name="Chen E."/>
            <person name="Marra M.A."/>
            <person name="Martienssen R."/>
            <person name="McCombie W.R."/>
        </authorList>
    </citation>
    <scope>NUCLEOTIDE SEQUENCE [LARGE SCALE GENOMIC DNA]</scope>
    <source>
        <strain>cv. Columbia</strain>
    </source>
</reference>
<reference key="6">
    <citation type="journal article" date="2017" name="Plant J.">
        <title>Araport11: a complete reannotation of the Arabidopsis thaliana reference genome.</title>
        <authorList>
            <person name="Cheng C.Y."/>
            <person name="Krishnakumar V."/>
            <person name="Chan A.P."/>
            <person name="Thibaud-Nissen F."/>
            <person name="Schobel S."/>
            <person name="Town C.D."/>
        </authorList>
    </citation>
    <scope>GENOME REANNOTATION</scope>
    <source>
        <strain>cv. Columbia</strain>
    </source>
</reference>
<reference key="7">
    <citation type="journal article" date="2003" name="Science">
        <title>Empirical analysis of transcriptional activity in the Arabidopsis genome.</title>
        <authorList>
            <person name="Yamada K."/>
            <person name="Lim J."/>
            <person name="Dale J.M."/>
            <person name="Chen H."/>
            <person name="Shinn P."/>
            <person name="Palm C.J."/>
            <person name="Southwick A.M."/>
            <person name="Wu H.C."/>
            <person name="Kim C.J."/>
            <person name="Nguyen M."/>
            <person name="Pham P.K."/>
            <person name="Cheuk R.F."/>
            <person name="Karlin-Newmann G."/>
            <person name="Liu S.X."/>
            <person name="Lam B."/>
            <person name="Sakano H."/>
            <person name="Wu T."/>
            <person name="Yu G."/>
            <person name="Miranda M."/>
            <person name="Quach H.L."/>
            <person name="Tripp M."/>
            <person name="Chang C.H."/>
            <person name="Lee J.M."/>
            <person name="Toriumi M.J."/>
            <person name="Chan M.M."/>
            <person name="Tang C.C."/>
            <person name="Onodera C.S."/>
            <person name="Deng J.M."/>
            <person name="Akiyama K."/>
            <person name="Ansari Y."/>
            <person name="Arakawa T."/>
            <person name="Banh J."/>
            <person name="Banno F."/>
            <person name="Bowser L."/>
            <person name="Brooks S.Y."/>
            <person name="Carninci P."/>
            <person name="Chao Q."/>
            <person name="Choy N."/>
            <person name="Enju A."/>
            <person name="Goldsmith A.D."/>
            <person name="Gurjal M."/>
            <person name="Hansen N.F."/>
            <person name="Hayashizaki Y."/>
            <person name="Johnson-Hopson C."/>
            <person name="Hsuan V.W."/>
            <person name="Iida K."/>
            <person name="Karnes M."/>
            <person name="Khan S."/>
            <person name="Koesema E."/>
            <person name="Ishida J."/>
            <person name="Jiang P.X."/>
            <person name="Jones T."/>
            <person name="Kawai J."/>
            <person name="Kamiya A."/>
            <person name="Meyers C."/>
            <person name="Nakajima M."/>
            <person name="Narusaka M."/>
            <person name="Seki M."/>
            <person name="Sakurai T."/>
            <person name="Satou M."/>
            <person name="Tamse R."/>
            <person name="Vaysberg M."/>
            <person name="Wallender E.K."/>
            <person name="Wong C."/>
            <person name="Yamamura Y."/>
            <person name="Yuan S."/>
            <person name="Shinozaki K."/>
            <person name="Davis R.W."/>
            <person name="Theologis A."/>
            <person name="Ecker J.R."/>
        </authorList>
    </citation>
    <scope>NUCLEOTIDE SEQUENCE [LARGE SCALE MRNA] (ISOFORM 1)</scope>
    <source>
        <strain>cv. Columbia</strain>
    </source>
</reference>
<reference key="8">
    <citation type="submission" date="2002-03" db="EMBL/GenBank/DDBJ databases">
        <title>Full-length cDNA from Arabidopsis thaliana.</title>
        <authorList>
            <person name="Brover V.V."/>
            <person name="Troukhan M.E."/>
            <person name="Alexandrov N.A."/>
            <person name="Lu Y.-P."/>
            <person name="Flavell R.B."/>
            <person name="Feldmann K.A."/>
        </authorList>
    </citation>
    <scope>NUCLEOTIDE SEQUENCE [LARGE SCALE MRNA] (ISOFORM 1)</scope>
</reference>
<reference key="9">
    <citation type="journal article" date="2010" name="Phytochemistry">
        <title>Highly conserved progesterone 5 beta-reductase genes (P5 beta R) from 5 beta-cardenolide-free and 5 beta-cardenolide-producing angiosperms.</title>
        <authorList>
            <person name="Bauer P."/>
            <person name="Munkert J."/>
            <person name="Brydziun M."/>
            <person name="Burda E."/>
            <person name="Mueller-Uri F."/>
            <person name="Groeger H."/>
            <person name="Muller Y.A."/>
            <person name="Kreis W."/>
        </authorList>
    </citation>
    <scope>CATALYTIC ACTIVITY</scope>
    <scope>SUBSTRATE SPECIFICITY</scope>
</reference>
<reference key="10">
    <citation type="journal article" date="2012" name="Mol. Cell. Proteomics">
        <title>Comparative large-scale characterisation of plant vs. mammal proteins reveals similar and idiosyncratic N-alpha acetylation features.</title>
        <authorList>
            <person name="Bienvenut W.V."/>
            <person name="Sumpton D."/>
            <person name="Martinez A."/>
            <person name="Lilla S."/>
            <person name="Espagne C."/>
            <person name="Meinnel T."/>
            <person name="Giglione C."/>
        </authorList>
    </citation>
    <scope>ACETYLATION [LARGE SCALE ANALYSIS] AT SER-2</scope>
    <scope>CLEAVAGE OF INITIATOR METHIONINE [LARGE SCALE ANALYSIS]</scope>
    <scope>IDENTIFICATION BY MASS SPECTROMETRY [LARGE SCALE ANALYSIS]</scope>
</reference>
<reference key="11">
    <citation type="journal article" date="2012" name="Phytochemistry">
        <title>Vein Patterning 1-encoded progesterone 5?-reductase: activity-guided improvement of catalytic efficiency.</title>
        <authorList>
            <person name="Bauer P."/>
            <person name="Rudolph K."/>
            <person name="Mueller-Uri F."/>
            <person name="Kreis W."/>
        </authorList>
    </citation>
    <scope>CATALYTIC ACTIVITY</scope>
    <scope>BIOPHYSICOCHEMICAL PROPERTIES</scope>
</reference>
<reference key="12">
    <citation type="journal article" date="2018" name="Phytochemistry">
        <title>PRISEs (progesterone 5beta-reductase and/or iridoid synthase-like 1,4-enone reductases): Catalytic and substrate promiscuity allows for realization of multiple pathways in plant metabolism.</title>
        <authorList>
            <person name="Schmidt K."/>
            <person name="Petersen J."/>
            <person name="Munkert J."/>
            <person name="Egerer-Sieber C."/>
            <person name="Hornig M."/>
            <person name="Muller Y.A."/>
            <person name="Kreis W."/>
        </authorList>
    </citation>
    <scope>X-RAY CRYSTALLOGRAPHY (1.90 ANGSTROMS) OF 17-388</scope>
</reference>
<proteinExistence type="evidence at protein level"/>
<gene>
    <name type="primary">VEP1</name>
    <name type="synonym">AWI31</name>
    <name type="ordered locus">At4g24220</name>
    <name type="ORF">T22A6.50</name>
</gene>
<name>VEP1_ARATH</name>
<keyword id="KW-0002">3D-structure</keyword>
<keyword id="KW-0007">Acetylation</keyword>
<keyword id="KW-0025">Alternative splicing</keyword>
<keyword id="KW-0521">NADP</keyword>
<keyword id="KW-0560">Oxidoreductase</keyword>
<keyword id="KW-1185">Reference proteome</keyword>
<dbReference type="EC" id="1.3.1.3" evidence="3 4 5"/>
<dbReference type="EMBL" id="X99793">
    <property type="protein sequence ID" value="CAA68126.1"/>
    <property type="status" value="ALT_FRAME"/>
    <property type="molecule type" value="Genomic_DNA"/>
</dbReference>
<dbReference type="EMBL" id="EF579963">
    <property type="protein sequence ID" value="ABU55811.1"/>
    <property type="molecule type" value="mRNA"/>
</dbReference>
<dbReference type="EMBL" id="AL078637">
    <property type="protein sequence ID" value="CAB45057.1"/>
    <property type="molecule type" value="Genomic_DNA"/>
</dbReference>
<dbReference type="EMBL" id="AL161561">
    <property type="protein sequence ID" value="CAB79332.1"/>
    <property type="molecule type" value="Genomic_DNA"/>
</dbReference>
<dbReference type="EMBL" id="CP002687">
    <property type="protein sequence ID" value="AEE84868.1"/>
    <property type="molecule type" value="Genomic_DNA"/>
</dbReference>
<dbReference type="EMBL" id="CP002687">
    <property type="protein sequence ID" value="AEE84869.1"/>
    <property type="molecule type" value="Genomic_DNA"/>
</dbReference>
<dbReference type="EMBL" id="AY062451">
    <property type="protein sequence ID" value="AAL32529.1"/>
    <property type="molecule type" value="mRNA"/>
</dbReference>
<dbReference type="EMBL" id="BT008479">
    <property type="protein sequence ID" value="AAP37838.1"/>
    <property type="molecule type" value="mRNA"/>
</dbReference>
<dbReference type="EMBL" id="AY087323">
    <property type="protein sequence ID" value="AAM64873.1"/>
    <property type="molecule type" value="mRNA"/>
</dbReference>
<dbReference type="PIR" id="T09885">
    <property type="entry name" value="T09885"/>
</dbReference>
<dbReference type="RefSeq" id="NP_001078438.1">
    <molecule id="Q9STX2-2"/>
    <property type="nucleotide sequence ID" value="NM_001084969.1"/>
</dbReference>
<dbReference type="RefSeq" id="NP_194153.1">
    <molecule id="Q9STX2-1"/>
    <property type="nucleotide sequence ID" value="NM_118555.4"/>
</dbReference>
<dbReference type="PDB" id="6EL3">
    <property type="method" value="X-ray"/>
    <property type="resolution" value="1.90 A"/>
    <property type="chains" value="A/B/C/D/E/F=17-388"/>
</dbReference>
<dbReference type="PDBsum" id="6EL3"/>
<dbReference type="SMR" id="Q9STX2"/>
<dbReference type="BioGRID" id="13812">
    <property type="interactions" value="1"/>
</dbReference>
<dbReference type="FunCoup" id="Q9STX2">
    <property type="interactions" value="356"/>
</dbReference>
<dbReference type="STRING" id="3702.Q9STX2"/>
<dbReference type="iPTMnet" id="Q9STX2"/>
<dbReference type="PaxDb" id="3702-AT4G24220.1"/>
<dbReference type="ProteomicsDB" id="243229">
    <molecule id="Q9STX2-1"/>
</dbReference>
<dbReference type="EnsemblPlants" id="AT4G24220.1">
    <molecule id="Q9STX2-1"/>
    <property type="protein sequence ID" value="AT4G24220.1"/>
    <property type="gene ID" value="AT4G24220"/>
</dbReference>
<dbReference type="EnsemblPlants" id="AT4G24220.2">
    <molecule id="Q9STX2-2"/>
    <property type="protein sequence ID" value="AT4G24220.2"/>
    <property type="gene ID" value="AT4G24220"/>
</dbReference>
<dbReference type="GeneID" id="828523"/>
<dbReference type="Gramene" id="AT4G24220.1">
    <molecule id="Q9STX2-1"/>
    <property type="protein sequence ID" value="AT4G24220.1"/>
    <property type="gene ID" value="AT4G24220"/>
</dbReference>
<dbReference type="Gramene" id="AT4G24220.2">
    <molecule id="Q9STX2-2"/>
    <property type="protein sequence ID" value="AT4G24220.2"/>
    <property type="gene ID" value="AT4G24220"/>
</dbReference>
<dbReference type="KEGG" id="ath:AT4G24220"/>
<dbReference type="Araport" id="AT4G24220"/>
<dbReference type="TAIR" id="AT4G24220">
    <property type="gene designation" value="VEP1"/>
</dbReference>
<dbReference type="eggNOG" id="ENOG502QSRH">
    <property type="taxonomic scope" value="Eukaryota"/>
</dbReference>
<dbReference type="InParanoid" id="Q9STX2"/>
<dbReference type="OMA" id="GRPFVFP"/>
<dbReference type="OrthoDB" id="1731983at2759"/>
<dbReference type="PhylomeDB" id="Q9STX2"/>
<dbReference type="BioCyc" id="ARA:AT4G24220-MONOMER"/>
<dbReference type="BioCyc" id="MetaCyc:AT4G24220-MONOMER"/>
<dbReference type="BRENDA" id="1.3.1.3">
    <property type="organism ID" value="399"/>
</dbReference>
<dbReference type="PRO" id="PR:Q9STX2"/>
<dbReference type="Proteomes" id="UP000006548">
    <property type="component" value="Chromosome 4"/>
</dbReference>
<dbReference type="ExpressionAtlas" id="Q9STX2">
    <property type="expression patterns" value="baseline and differential"/>
</dbReference>
<dbReference type="GO" id="GO:0005829">
    <property type="term" value="C:cytosol"/>
    <property type="evidence" value="ECO:0007005"/>
    <property type="project" value="TAIR"/>
</dbReference>
<dbReference type="GO" id="GO:0047787">
    <property type="term" value="F:Delta4-3-oxosteroid 5beta-reductase activity"/>
    <property type="evidence" value="ECO:0007669"/>
    <property type="project" value="UniProtKB-EC"/>
</dbReference>
<dbReference type="GO" id="GO:0035671">
    <property type="term" value="F:enone reductase activity"/>
    <property type="evidence" value="ECO:0000314"/>
    <property type="project" value="TAIR"/>
</dbReference>
<dbReference type="GO" id="GO:0046983">
    <property type="term" value="F:protein dimerization activity"/>
    <property type="evidence" value="ECO:0000353"/>
    <property type="project" value="TAIR"/>
</dbReference>
<dbReference type="GO" id="GO:0009611">
    <property type="term" value="P:response to wounding"/>
    <property type="evidence" value="ECO:0000270"/>
    <property type="project" value="TAIR"/>
</dbReference>
<dbReference type="GO" id="GO:0008202">
    <property type="term" value="P:steroid metabolic process"/>
    <property type="evidence" value="ECO:0000314"/>
    <property type="project" value="TAIR"/>
</dbReference>
<dbReference type="GO" id="GO:0010051">
    <property type="term" value="P:xylem and phloem pattern formation"/>
    <property type="evidence" value="ECO:0000315"/>
    <property type="project" value="TAIR"/>
</dbReference>
<dbReference type="CDD" id="cd08948">
    <property type="entry name" value="5beta-POR_like_SDR_a"/>
    <property type="match status" value="1"/>
</dbReference>
<dbReference type="FunFam" id="3.40.50.720:FF:000808">
    <property type="entry name" value="Iridoid synthase"/>
    <property type="match status" value="1"/>
</dbReference>
<dbReference type="Gene3D" id="3.40.50.720">
    <property type="entry name" value="NAD(P)-binding Rossmann-like Domain"/>
    <property type="match status" value="1"/>
</dbReference>
<dbReference type="InterPro" id="IPR036291">
    <property type="entry name" value="NAD(P)-bd_dom_sf"/>
</dbReference>
<dbReference type="InterPro" id="IPR055222">
    <property type="entry name" value="PRISE-like_Rossmann-fold"/>
</dbReference>
<dbReference type="PANTHER" id="PTHR32487">
    <property type="entry name" value="3-OXO-DELTA(4,5)-STEROID 5-BETA-REDUCTASE"/>
    <property type="match status" value="1"/>
</dbReference>
<dbReference type="PANTHER" id="PTHR32487:SF0">
    <property type="entry name" value="3-OXO-DELTA(4,5)-STEROID 5-BETA-REDUCTASE"/>
    <property type="match status" value="1"/>
</dbReference>
<dbReference type="Pfam" id="PF22917">
    <property type="entry name" value="PRISE"/>
    <property type="match status" value="1"/>
</dbReference>
<dbReference type="SUPFAM" id="SSF51735">
    <property type="entry name" value="NAD(P)-binding Rossmann-fold domains"/>
    <property type="match status" value="1"/>
</dbReference>
<comment type="function">
    <text evidence="2 3">Involved in vascular strand development. Catalyzes the stereospecific conversion of progesterone to 5-beta-pregnane-3,20-dione. Can use progesterone, testosterone, 21-acetyl cortexone, 2-cyclohexenone, but-1-en-3-one, ethyl acrylate, ethylmethacrylate, cortisone and canarigenone as substrates, lower activity with 3-methyl-2-cyclohexenone and 3,5,5-trimethyl-2-cyclohexenone as substrate, and no activity with canarigenin, canarigenin digitoxoside and pregnenolone. May be involved in the formation of 5-beta phytoecdysteroids.</text>
</comment>
<comment type="catalytic activity">
    <reaction evidence="3 4 5">
        <text>5beta-cholestan-3-one + NADP(+) = cholest-4-en-3-one + NADPH + H(+)</text>
        <dbReference type="Rhea" id="RHEA:11524"/>
        <dbReference type="ChEBI" id="CHEBI:15378"/>
        <dbReference type="ChEBI" id="CHEBI:16074"/>
        <dbReference type="ChEBI" id="CHEBI:16175"/>
        <dbReference type="ChEBI" id="CHEBI:57783"/>
        <dbReference type="ChEBI" id="CHEBI:58349"/>
        <dbReference type="EC" id="1.3.1.3"/>
    </reaction>
</comment>
<comment type="catalytic activity">
    <reaction evidence="3 4 5">
        <text>4,5beta-dihydrocortisone + NADP(+) = cortisone + NADPH + H(+)</text>
        <dbReference type="Rhea" id="RHEA:14037"/>
        <dbReference type="ChEBI" id="CHEBI:15378"/>
        <dbReference type="ChEBI" id="CHEBI:16962"/>
        <dbReference type="ChEBI" id="CHEBI:18093"/>
        <dbReference type="ChEBI" id="CHEBI:57783"/>
        <dbReference type="ChEBI" id="CHEBI:58349"/>
        <dbReference type="EC" id="1.3.1.3"/>
    </reaction>
</comment>
<comment type="biophysicochemical properties">
    <kinetics>
        <KM evidence="3 5">268 uM for progesterone</KM>
        <KM evidence="3 5">755 uM for cortisol</KM>
        <KM evidence="3 5">1423 uM for 4-androstene-3,17-dione</KM>
        <KM evidence="3 5">764 uM for cortexone</KM>
        <KM evidence="3 5">5 uM for NADPH</KM>
        <KM evidence="3 5">116 uM for 2-cyclohexen-1-one</KM>
        <text>kcat is 10.11 min(-1) with progesterone as substrate. kcat is 66.85 min(-1) with 2-cyclohexen-1-one as substrate.</text>
    </kinetics>
    <phDependence>
        <text evidence="3 5">Optimum pH is 8.0.</text>
    </phDependence>
    <temperatureDependence>
        <text evidence="3 5">Optimum temperature is 45 degrees Celsius.</text>
    </temperatureDependence>
</comment>
<comment type="subunit">
    <text evidence="3">Homodimer.</text>
</comment>
<comment type="alternative products">
    <event type="alternative splicing"/>
    <isoform>
        <id>Q9STX2-1</id>
        <name>1</name>
        <sequence type="displayed"/>
    </isoform>
    <isoform>
        <id>Q9STX2-2</id>
        <name>2</name>
        <sequence type="described" ref="VSP_044368"/>
    </isoform>
</comment>
<comment type="tissue specificity">
    <text evidence="2 3">Expressed in roots, stems, leaves, flowers, seeds and siliques. Expressed in the vascular bundles.</text>
</comment>
<comment type="induction">
    <text evidence="2 7">Up-regulated by wounding. Not induced by drought, high salt, low temperature or herbicide treatment.</text>
</comment>
<comment type="similarity">
    <text evidence="8">Belongs to the short-chain dehydrogenases/reductases (SDR) family. Highly divergent.</text>
</comment>
<comment type="sequence caution" evidence="8">
    <conflict type="frameshift">
        <sequence resource="EMBL-CDS" id="CAA68126"/>
    </conflict>
</comment>
<feature type="initiator methionine" description="Removed" evidence="10">
    <location>
        <position position="1"/>
    </location>
</feature>
<feature type="chain" id="PRO_0000419904" description="3-oxo-Delta(4,5)-steroid 5-beta-reductase">
    <location>
        <begin position="2"/>
        <end position="388"/>
    </location>
</feature>
<feature type="active site" evidence="1">
    <location>
        <position position="147"/>
    </location>
</feature>
<feature type="active site" evidence="1">
    <location>
        <position position="178"/>
    </location>
</feature>
<feature type="binding site" evidence="6 9">
    <location>
        <begin position="35"/>
        <end position="37"/>
    </location>
    <ligand>
        <name>NADP(+)</name>
        <dbReference type="ChEBI" id="CHEBI:58349"/>
    </ligand>
</feature>
<feature type="binding site" evidence="6 9">
    <location>
        <begin position="63"/>
        <end position="64"/>
    </location>
    <ligand>
        <name>NADP(+)</name>
        <dbReference type="ChEBI" id="CHEBI:58349"/>
    </ligand>
</feature>
<feature type="binding site" evidence="6 9">
    <location>
        <begin position="81"/>
        <end position="82"/>
    </location>
    <ligand>
        <name>NADP(+)</name>
        <dbReference type="ChEBI" id="CHEBI:58349"/>
    </ligand>
</feature>
<feature type="binding site" evidence="6 9">
    <location>
        <position position="105"/>
    </location>
    <ligand>
        <name>NADP(+)</name>
        <dbReference type="ChEBI" id="CHEBI:58349"/>
    </ligand>
</feature>
<feature type="binding site" evidence="6 9">
    <location>
        <position position="143"/>
    </location>
    <ligand>
        <name>NADP(+)</name>
        <dbReference type="ChEBI" id="CHEBI:58349"/>
    </ligand>
</feature>
<feature type="binding site" evidence="6 9">
    <location>
        <position position="178"/>
    </location>
    <ligand>
        <name>NADP(+)</name>
        <dbReference type="ChEBI" id="CHEBI:58349"/>
    </ligand>
</feature>
<feature type="binding site" evidence="6 9">
    <location>
        <position position="205"/>
    </location>
    <ligand>
        <name>NADP(+)</name>
        <dbReference type="ChEBI" id="CHEBI:58349"/>
    </ligand>
</feature>
<feature type="binding site" evidence="6 9">
    <location>
        <begin position="212"/>
        <end position="214"/>
    </location>
    <ligand>
        <name>NADP(+)</name>
        <dbReference type="ChEBI" id="CHEBI:58349"/>
    </ligand>
</feature>
<feature type="modified residue" description="N-acetylserine" evidence="10">
    <location>
        <position position="2"/>
    </location>
</feature>
<feature type="splice variant" id="VSP_044368" description="In isoform 2." evidence="8">
    <location>
        <position position="13"/>
    </location>
</feature>
<feature type="sequence conflict" description="In Ref. 1; CAA68126." evidence="8" ref="1">
    <original>S</original>
    <variation>R</variation>
    <location>
        <position position="2"/>
    </location>
</feature>
<feature type="sequence conflict" description="In Ref. 1; CAA68126." evidence="8" ref="1">
    <original>G</original>
    <variation>A</variation>
    <location>
        <position position="36"/>
    </location>
</feature>
<feature type="sequence conflict" description="In Ref. 1; CAA68126." evidence="8" ref="1">
    <original>I</original>
    <variation>T</variation>
    <location>
        <position position="192"/>
    </location>
</feature>
<feature type="sequence conflict" description="In Ref. 1; CAA68126." evidence="8" ref="1">
    <original>S</original>
    <variation>R</variation>
    <location>
        <position position="359"/>
    </location>
</feature>
<feature type="strand" evidence="11">
    <location>
        <begin position="27"/>
        <end position="33"/>
    </location>
</feature>
<feature type="helix" evidence="11">
    <location>
        <begin position="39"/>
        <end position="45"/>
    </location>
</feature>
<feature type="strand" evidence="11">
    <location>
        <begin position="55"/>
        <end position="64"/>
    </location>
</feature>
<feature type="helix" evidence="11">
    <location>
        <begin position="68"/>
        <end position="70"/>
    </location>
</feature>
<feature type="strand" evidence="11">
    <location>
        <begin position="75"/>
        <end position="79"/>
    </location>
</feature>
<feature type="helix" evidence="11">
    <location>
        <begin position="85"/>
        <end position="90"/>
    </location>
</feature>
<feature type="strand" evidence="11">
    <location>
        <begin position="100"/>
        <end position="103"/>
    </location>
</feature>
<feature type="helix" evidence="11">
    <location>
        <begin position="112"/>
        <end position="130"/>
    </location>
</feature>
<feature type="turn" evidence="11">
    <location>
        <begin position="131"/>
        <end position="133"/>
    </location>
</feature>
<feature type="strand" evidence="11">
    <location>
        <begin position="139"/>
        <end position="143"/>
    </location>
</feature>
<feature type="strand" evidence="11">
    <location>
        <begin position="156"/>
        <end position="158"/>
    </location>
</feature>
<feature type="strand" evidence="11">
    <location>
        <begin position="163"/>
        <end position="165"/>
    </location>
</feature>
<feature type="helix" evidence="11">
    <location>
        <begin position="177"/>
        <end position="189"/>
    </location>
</feature>
<feature type="strand" evidence="11">
    <location>
        <begin position="196"/>
        <end position="202"/>
    </location>
</feature>
<feature type="strand" evidence="11">
    <location>
        <begin position="204"/>
        <end position="206"/>
    </location>
</feature>
<feature type="helix" evidence="11">
    <location>
        <begin position="216"/>
        <end position="227"/>
    </location>
</feature>
<feature type="turn" evidence="11">
    <location>
        <begin position="242"/>
        <end position="244"/>
    </location>
</feature>
<feature type="helix" evidence="11">
    <location>
        <begin position="252"/>
        <end position="264"/>
    </location>
</feature>
<feature type="helix" evidence="11">
    <location>
        <begin position="266"/>
        <end position="268"/>
    </location>
</feature>
<feature type="strand" evidence="11">
    <location>
        <begin position="270"/>
        <end position="275"/>
    </location>
</feature>
<feature type="strand" evidence="11">
    <location>
        <begin position="281"/>
        <end position="283"/>
    </location>
</feature>
<feature type="helix" evidence="11">
    <location>
        <begin position="284"/>
        <end position="287"/>
    </location>
</feature>
<feature type="helix" evidence="11">
    <location>
        <begin position="290"/>
        <end position="294"/>
    </location>
</feature>
<feature type="strand" evidence="11">
    <location>
        <begin position="297"/>
        <end position="300"/>
    </location>
</feature>
<feature type="turn" evidence="11">
    <location>
        <begin position="303"/>
        <end position="305"/>
    </location>
</feature>
<feature type="helix" evidence="11">
    <location>
        <begin position="309"/>
        <end position="312"/>
    </location>
</feature>
<feature type="turn" evidence="11">
    <location>
        <begin position="313"/>
        <end position="315"/>
    </location>
</feature>
<feature type="helix" evidence="11">
    <location>
        <begin position="318"/>
        <end position="327"/>
    </location>
</feature>
<feature type="helix" evidence="11">
    <location>
        <begin position="334"/>
        <end position="337"/>
    </location>
</feature>
<feature type="helix" evidence="11">
    <location>
        <begin position="340"/>
        <end position="346"/>
    </location>
</feature>
<feature type="helix" evidence="11">
    <location>
        <begin position="357"/>
        <end position="361"/>
    </location>
</feature>
<feature type="helix" evidence="11">
    <location>
        <begin position="370"/>
        <end position="381"/>
    </location>
</feature>
<evidence type="ECO:0000250" key="1">
    <source>
        <dbReference type="UniProtKB" id="K7WDL7"/>
    </source>
</evidence>
<evidence type="ECO:0000269" key="2">
    <source>
    </source>
</evidence>
<evidence type="ECO:0000269" key="3">
    <source>
    </source>
</evidence>
<evidence type="ECO:0000269" key="4">
    <source>
    </source>
</evidence>
<evidence type="ECO:0000269" key="5">
    <source>
    </source>
</evidence>
<evidence type="ECO:0000269" key="6">
    <source>
    </source>
</evidence>
<evidence type="ECO:0000269" key="7">
    <source>
    </source>
</evidence>
<evidence type="ECO:0000305" key="8"/>
<evidence type="ECO:0007744" key="9">
    <source>
        <dbReference type="PDB" id="6EL3"/>
    </source>
</evidence>
<evidence type="ECO:0007744" key="10">
    <source>
    </source>
</evidence>
<evidence type="ECO:0007829" key="11">
    <source>
        <dbReference type="PDB" id="6EL3"/>
    </source>
</evidence>
<accession>Q9STX2</accession>
<accession>A8MRU3</accession>
<accession>Q39171</accession>